<evidence type="ECO:0000250" key="1"/>
<evidence type="ECO:0000250" key="2">
    <source>
        <dbReference type="UniProtKB" id="Q920D5"/>
    </source>
</evidence>
<evidence type="ECO:0000255" key="3"/>
<evidence type="ECO:0000255" key="4">
    <source>
        <dbReference type="PROSITE-ProRule" id="PRU00046"/>
    </source>
</evidence>
<evidence type="ECO:0000256" key="5">
    <source>
        <dbReference type="SAM" id="MobiDB-lite"/>
    </source>
</evidence>
<evidence type="ECO:0000305" key="6"/>
<name>CASPC_MACMU</name>
<dbReference type="EC" id="3.4.22.-"/>
<dbReference type="EMBL" id="DQ644576">
    <property type="protein sequence ID" value="ABG21363.1"/>
    <property type="molecule type" value="mRNA"/>
</dbReference>
<dbReference type="RefSeq" id="NP_001035896.1">
    <property type="nucleotide sequence ID" value="NM_001042431.2"/>
</dbReference>
<dbReference type="SMR" id="Q153Z0"/>
<dbReference type="FunCoup" id="Q153Z0">
    <property type="interactions" value="437"/>
</dbReference>
<dbReference type="STRING" id="9544.ENSMMUP00000051430"/>
<dbReference type="MEROPS" id="C14.013"/>
<dbReference type="PaxDb" id="9544-ENSMMUP00000021744"/>
<dbReference type="GeneID" id="724039"/>
<dbReference type="KEGG" id="mcc:724039"/>
<dbReference type="CTD" id="100506742"/>
<dbReference type="eggNOG" id="KOG3573">
    <property type="taxonomic scope" value="Eukaryota"/>
</dbReference>
<dbReference type="InParanoid" id="Q153Z0"/>
<dbReference type="OrthoDB" id="6097640at2759"/>
<dbReference type="Proteomes" id="UP000006718">
    <property type="component" value="Unassembled WGS sequence"/>
</dbReference>
<dbReference type="GO" id="GO:0097169">
    <property type="term" value="C:AIM2 inflammasome complex"/>
    <property type="evidence" value="ECO:0000318"/>
    <property type="project" value="GO_Central"/>
</dbReference>
<dbReference type="GO" id="GO:0072557">
    <property type="term" value="C:IPAF inflammasome complex"/>
    <property type="evidence" value="ECO:0000318"/>
    <property type="project" value="GO_Central"/>
</dbReference>
<dbReference type="GO" id="GO:0072559">
    <property type="term" value="C:NLRP3 inflammasome complex"/>
    <property type="evidence" value="ECO:0000318"/>
    <property type="project" value="GO_Central"/>
</dbReference>
<dbReference type="GO" id="GO:0004197">
    <property type="term" value="F:cysteine-type endopeptidase activity"/>
    <property type="evidence" value="ECO:0007669"/>
    <property type="project" value="InterPro"/>
</dbReference>
<dbReference type="GO" id="GO:0006915">
    <property type="term" value="P:apoptotic process"/>
    <property type="evidence" value="ECO:0007669"/>
    <property type="project" value="UniProtKB-KW"/>
</dbReference>
<dbReference type="GO" id="GO:0051604">
    <property type="term" value="P:protein maturation"/>
    <property type="evidence" value="ECO:0007669"/>
    <property type="project" value="UniProtKB-ARBA"/>
</dbReference>
<dbReference type="GO" id="GO:0006508">
    <property type="term" value="P:proteolysis"/>
    <property type="evidence" value="ECO:0007669"/>
    <property type="project" value="UniProtKB-KW"/>
</dbReference>
<dbReference type="GO" id="GO:0042981">
    <property type="term" value="P:regulation of apoptotic process"/>
    <property type="evidence" value="ECO:0007669"/>
    <property type="project" value="InterPro"/>
</dbReference>
<dbReference type="GO" id="GO:0050727">
    <property type="term" value="P:regulation of inflammatory response"/>
    <property type="evidence" value="ECO:0000318"/>
    <property type="project" value="GO_Central"/>
</dbReference>
<dbReference type="CDD" id="cd08325">
    <property type="entry name" value="CARD_CASP1-like"/>
    <property type="match status" value="1"/>
</dbReference>
<dbReference type="CDD" id="cd00032">
    <property type="entry name" value="CASc"/>
    <property type="match status" value="1"/>
</dbReference>
<dbReference type="FunFam" id="3.40.50.1460:FF:000007">
    <property type="entry name" value="Caspase-1"/>
    <property type="match status" value="1"/>
</dbReference>
<dbReference type="Gene3D" id="3.40.50.1460">
    <property type="match status" value="1"/>
</dbReference>
<dbReference type="InterPro" id="IPR001315">
    <property type="entry name" value="CARD"/>
</dbReference>
<dbReference type="InterPro" id="IPR029030">
    <property type="entry name" value="Caspase-like_dom_sf"/>
</dbReference>
<dbReference type="InterPro" id="IPR033139">
    <property type="entry name" value="Caspase_cys_AS"/>
</dbReference>
<dbReference type="InterPro" id="IPR016129">
    <property type="entry name" value="Caspase_his_AS"/>
</dbReference>
<dbReference type="InterPro" id="IPR011029">
    <property type="entry name" value="DEATH-like_dom_sf"/>
</dbReference>
<dbReference type="InterPro" id="IPR002398">
    <property type="entry name" value="Pept_C14"/>
</dbReference>
<dbReference type="InterPro" id="IPR011600">
    <property type="entry name" value="Pept_C14_caspase"/>
</dbReference>
<dbReference type="InterPro" id="IPR002138">
    <property type="entry name" value="Pept_C14_p10"/>
</dbReference>
<dbReference type="InterPro" id="IPR001309">
    <property type="entry name" value="Pept_C14_p20"/>
</dbReference>
<dbReference type="InterPro" id="IPR015917">
    <property type="entry name" value="Pept_C14A"/>
</dbReference>
<dbReference type="PANTHER" id="PTHR47901">
    <property type="entry name" value="CASPASE RECRUITMENT DOMAIN-CONTAINING PROTEIN 18"/>
    <property type="match status" value="1"/>
</dbReference>
<dbReference type="PANTHER" id="PTHR47901:SF6">
    <property type="entry name" value="CASPASE-12"/>
    <property type="match status" value="1"/>
</dbReference>
<dbReference type="Pfam" id="PF00619">
    <property type="entry name" value="CARD"/>
    <property type="match status" value="1"/>
</dbReference>
<dbReference type="Pfam" id="PF00656">
    <property type="entry name" value="Peptidase_C14"/>
    <property type="match status" value="1"/>
</dbReference>
<dbReference type="PIRSF" id="PIRSF038001">
    <property type="entry name" value="Caspase_ICE"/>
    <property type="match status" value="1"/>
</dbReference>
<dbReference type="PRINTS" id="PR00376">
    <property type="entry name" value="IL1BCENZYME"/>
</dbReference>
<dbReference type="SMART" id="SM00115">
    <property type="entry name" value="CASc"/>
    <property type="match status" value="1"/>
</dbReference>
<dbReference type="SUPFAM" id="SSF52129">
    <property type="entry name" value="Caspase-like"/>
    <property type="match status" value="1"/>
</dbReference>
<dbReference type="SUPFAM" id="SSF47986">
    <property type="entry name" value="DEATH domain"/>
    <property type="match status" value="1"/>
</dbReference>
<dbReference type="PROSITE" id="PS50209">
    <property type="entry name" value="CARD"/>
    <property type="match status" value="1"/>
</dbReference>
<dbReference type="PROSITE" id="PS01122">
    <property type="entry name" value="CASPASE_CYS"/>
    <property type="match status" value="1"/>
</dbReference>
<dbReference type="PROSITE" id="PS01121">
    <property type="entry name" value="CASPASE_HIS"/>
    <property type="match status" value="1"/>
</dbReference>
<dbReference type="PROSITE" id="PS50207">
    <property type="entry name" value="CASPASE_P10"/>
    <property type="match status" value="1"/>
</dbReference>
<dbReference type="PROSITE" id="PS50208">
    <property type="entry name" value="CASPASE_P20"/>
    <property type="match status" value="1"/>
</dbReference>
<accession>Q153Z0</accession>
<organism>
    <name type="scientific">Macaca mulatta</name>
    <name type="common">Rhesus macaque</name>
    <dbReference type="NCBI Taxonomy" id="9544"/>
    <lineage>
        <taxon>Eukaryota</taxon>
        <taxon>Metazoa</taxon>
        <taxon>Chordata</taxon>
        <taxon>Craniata</taxon>
        <taxon>Vertebrata</taxon>
        <taxon>Euteleostomi</taxon>
        <taxon>Mammalia</taxon>
        <taxon>Eutheria</taxon>
        <taxon>Euarchontoglires</taxon>
        <taxon>Primates</taxon>
        <taxon>Haplorrhini</taxon>
        <taxon>Catarrhini</taxon>
        <taxon>Cercopithecidae</taxon>
        <taxon>Cercopithecinae</taxon>
        <taxon>Macaca</taxon>
    </lineage>
</organism>
<comment type="function">
    <text evidence="1">Involved in the activation cascade of caspases responsible for apoptosis execution.</text>
</comment>
<comment type="subunit">
    <text evidence="1 6">Heterotetramer that consists of two anti-parallel arranged heterodimers, each one formed by two subunits (Potential). May interact with TRAF2 (By similarity).</text>
</comment>
<comment type="similarity">
    <text evidence="6">Belongs to the peptidase C14A family.</text>
</comment>
<sequence>MADKKPSKEDPVNMVKLLTRNVLDGIFDDLMENNVLNTEELRNLGKGLNFMVNNAGNLVDNITEKAQMVGKILKDRLLSHPKQLSLEYQHESEDQESEESSASSSSSTESEEENEESKDEERAASAHSMAVPPTAPLEIQGAQPSGRLKLCPHAHFRELKTKRADEIYPVMEKEGRTRLALIICSKEFHYLLNRNGSELDLLGMQDLLENLGYSVVIEENLTAQEMETALRQFAARPEHQSSDSTFLVFMSHGILNGICGTKHWDQEPDVLHDDTIFEIFNNRNCRSLRDKPKVIIMQACRGSGAGIVWFTTDSGKASADTHGQLLQSSICNDAVTKAHVEKDFIAFKSSTPHNVSWRHEMSGSVFISQIIYYFKEYSWSHHLEEIFRKVQRSFETPNVVTQLPTIERLSMTRYFYLFPGN</sequence>
<keyword id="KW-0053">Apoptosis</keyword>
<keyword id="KW-0378">Hydrolase</keyword>
<keyword id="KW-0597">Phosphoprotein</keyword>
<keyword id="KW-0645">Protease</keyword>
<keyword id="KW-1185">Reference proteome</keyword>
<keyword id="KW-0788">Thiol protease</keyword>
<keyword id="KW-0865">Zymogen</keyword>
<protein>
    <recommendedName>
        <fullName>Caspase-12</fullName>
        <shortName>CASP-12</shortName>
        <ecNumber>3.4.22.-</ecNumber>
    </recommendedName>
</protein>
<proteinExistence type="evidence at transcript level"/>
<feature type="propeptide" id="PRO_0000317442" evidence="3">
    <location>
        <begin position="1"/>
        <end status="unknown"/>
    </location>
</feature>
<feature type="chain" id="PRO_0000317443" description="Caspase-12">
    <location>
        <begin status="unknown"/>
        <end position="421"/>
    </location>
</feature>
<feature type="domain" description="CARD" evidence="4">
    <location>
        <begin position="1"/>
        <end position="92"/>
    </location>
</feature>
<feature type="region of interest" description="Disordered" evidence="5">
    <location>
        <begin position="88"/>
        <end position="131"/>
    </location>
</feature>
<feature type="compositionally biased region" description="Acidic residues" evidence="5">
    <location>
        <begin position="109"/>
        <end position="118"/>
    </location>
</feature>
<feature type="active site" evidence="1">
    <location>
        <position position="252"/>
    </location>
</feature>
<feature type="active site" evidence="1">
    <location>
        <position position="300"/>
    </location>
</feature>
<feature type="modified residue" description="Phosphoserine" evidence="2">
    <location>
        <position position="85"/>
    </location>
</feature>
<reference key="1">
    <citation type="submission" date="2006-05" db="EMBL/GenBank/DDBJ databases">
        <title>Caspase 12 expression in FrhK4 cells.</title>
        <authorList>
            <person name="Kulka M."/>
            <person name="Goswami B.B."/>
        </authorList>
    </citation>
    <scope>NUCLEOTIDE SEQUENCE [MRNA]</scope>
</reference>